<proteinExistence type="inferred from homology"/>
<feature type="chain" id="PRO_1000132128" description="Protein nucleotidyltransferase YdiU">
    <location>
        <begin position="1"/>
        <end position="480"/>
    </location>
</feature>
<feature type="active site" description="Proton acceptor" evidence="1">
    <location>
        <position position="248"/>
    </location>
</feature>
<feature type="binding site" evidence="1">
    <location>
        <position position="86"/>
    </location>
    <ligand>
        <name>ATP</name>
        <dbReference type="ChEBI" id="CHEBI:30616"/>
    </ligand>
</feature>
<feature type="binding site" evidence="1">
    <location>
        <position position="88"/>
    </location>
    <ligand>
        <name>ATP</name>
        <dbReference type="ChEBI" id="CHEBI:30616"/>
    </ligand>
</feature>
<feature type="binding site" evidence="1">
    <location>
        <position position="89"/>
    </location>
    <ligand>
        <name>ATP</name>
        <dbReference type="ChEBI" id="CHEBI:30616"/>
    </ligand>
</feature>
<feature type="binding site" evidence="1">
    <location>
        <position position="109"/>
    </location>
    <ligand>
        <name>ATP</name>
        <dbReference type="ChEBI" id="CHEBI:30616"/>
    </ligand>
</feature>
<feature type="binding site" evidence="1">
    <location>
        <position position="121"/>
    </location>
    <ligand>
        <name>ATP</name>
        <dbReference type="ChEBI" id="CHEBI:30616"/>
    </ligand>
</feature>
<feature type="binding site" evidence="1">
    <location>
        <position position="122"/>
    </location>
    <ligand>
        <name>ATP</name>
        <dbReference type="ChEBI" id="CHEBI:30616"/>
    </ligand>
</feature>
<feature type="binding site" evidence="1">
    <location>
        <position position="172"/>
    </location>
    <ligand>
        <name>ATP</name>
        <dbReference type="ChEBI" id="CHEBI:30616"/>
    </ligand>
</feature>
<feature type="binding site" evidence="1">
    <location>
        <position position="179"/>
    </location>
    <ligand>
        <name>ATP</name>
        <dbReference type="ChEBI" id="CHEBI:30616"/>
    </ligand>
</feature>
<feature type="binding site" evidence="1">
    <location>
        <position position="249"/>
    </location>
    <ligand>
        <name>Mg(2+)</name>
        <dbReference type="ChEBI" id="CHEBI:18420"/>
    </ligand>
</feature>
<feature type="binding site" evidence="1">
    <location>
        <position position="258"/>
    </location>
    <ligand>
        <name>ATP</name>
        <dbReference type="ChEBI" id="CHEBI:30616"/>
    </ligand>
</feature>
<feature type="binding site" evidence="1">
    <location>
        <position position="258"/>
    </location>
    <ligand>
        <name>Mg(2+)</name>
        <dbReference type="ChEBI" id="CHEBI:18420"/>
    </ligand>
</feature>
<evidence type="ECO:0000255" key="1">
    <source>
        <dbReference type="HAMAP-Rule" id="MF_00692"/>
    </source>
</evidence>
<sequence>MTLSFTARWRDELPATYTALLPTPLKNARLIWYNDELAQQLAIPASLFDVTNGAGVWGGETLLPGMSPVAQVYSGHQFGVWAGQLGDGRGILLGEQLLADGSTLDWHLKGAGLTPYSRMGDGRAVLRSTIRESLASEAMHYLGIPTTRALSIVASDTPVQRETQETGAMLMRLAQSHMRFGHFEHFYYRREPEKVQQLADFAIRHYWPQWQDVPEKYALWFEEVAARTGRLIAEWQTVGFSHGVMNTDNMSILGLTIDYGPFGFLDDYDPGFIGNHSDHQGRYRFDNQPSVALWNLQRLAQTLTPFIEIDALNRALDRYQDALLTHYGQRMRQKLGFFTEQKDDNALLNELFSLMAREGSDYTRTFRMLSHTEQQSASSPLRDTFIDRTAFDAWFERYRARLRTEAVDDALRQQQMQRVNPAVVLRNWLAQRAIDAAEQGDMAELHRLHEVLRQPFTDRDDDYASRPPEWGKRLEVSCSS</sequence>
<organism>
    <name type="scientific">Salmonella schwarzengrund (strain CVM19633)</name>
    <dbReference type="NCBI Taxonomy" id="439843"/>
    <lineage>
        <taxon>Bacteria</taxon>
        <taxon>Pseudomonadati</taxon>
        <taxon>Pseudomonadota</taxon>
        <taxon>Gammaproteobacteria</taxon>
        <taxon>Enterobacterales</taxon>
        <taxon>Enterobacteriaceae</taxon>
        <taxon>Salmonella</taxon>
    </lineage>
</organism>
<gene>
    <name evidence="1" type="primary">ydiU</name>
    <name evidence="1" type="synonym">selO</name>
    <name type="ordered locus">SeSA_A1440</name>
</gene>
<comment type="function">
    <text evidence="1">Nucleotidyltransferase involved in the post-translational modification of proteins. It can catalyze the addition of adenosine monophosphate (AMP) or uridine monophosphate (UMP) to a protein, resulting in modifications known as AMPylation and UMPylation.</text>
</comment>
<comment type="catalytic activity">
    <reaction evidence="1">
        <text>L-seryl-[protein] + ATP = 3-O-(5'-adenylyl)-L-seryl-[protein] + diphosphate</text>
        <dbReference type="Rhea" id="RHEA:58120"/>
        <dbReference type="Rhea" id="RHEA-COMP:9863"/>
        <dbReference type="Rhea" id="RHEA-COMP:15073"/>
        <dbReference type="ChEBI" id="CHEBI:29999"/>
        <dbReference type="ChEBI" id="CHEBI:30616"/>
        <dbReference type="ChEBI" id="CHEBI:33019"/>
        <dbReference type="ChEBI" id="CHEBI:142516"/>
        <dbReference type="EC" id="2.7.7.108"/>
    </reaction>
</comment>
<comment type="catalytic activity">
    <reaction evidence="1">
        <text>L-threonyl-[protein] + ATP = 3-O-(5'-adenylyl)-L-threonyl-[protein] + diphosphate</text>
        <dbReference type="Rhea" id="RHEA:54292"/>
        <dbReference type="Rhea" id="RHEA-COMP:11060"/>
        <dbReference type="Rhea" id="RHEA-COMP:13847"/>
        <dbReference type="ChEBI" id="CHEBI:30013"/>
        <dbReference type="ChEBI" id="CHEBI:30616"/>
        <dbReference type="ChEBI" id="CHEBI:33019"/>
        <dbReference type="ChEBI" id="CHEBI:138113"/>
        <dbReference type="EC" id="2.7.7.108"/>
    </reaction>
</comment>
<comment type="catalytic activity">
    <reaction evidence="1">
        <text>L-tyrosyl-[protein] + ATP = O-(5'-adenylyl)-L-tyrosyl-[protein] + diphosphate</text>
        <dbReference type="Rhea" id="RHEA:54288"/>
        <dbReference type="Rhea" id="RHEA-COMP:10136"/>
        <dbReference type="Rhea" id="RHEA-COMP:13846"/>
        <dbReference type="ChEBI" id="CHEBI:30616"/>
        <dbReference type="ChEBI" id="CHEBI:33019"/>
        <dbReference type="ChEBI" id="CHEBI:46858"/>
        <dbReference type="ChEBI" id="CHEBI:83624"/>
        <dbReference type="EC" id="2.7.7.108"/>
    </reaction>
</comment>
<comment type="catalytic activity">
    <reaction evidence="1">
        <text>L-histidyl-[protein] + UTP = N(tele)-(5'-uridylyl)-L-histidyl-[protein] + diphosphate</text>
        <dbReference type="Rhea" id="RHEA:83891"/>
        <dbReference type="Rhea" id="RHEA-COMP:9745"/>
        <dbReference type="Rhea" id="RHEA-COMP:20239"/>
        <dbReference type="ChEBI" id="CHEBI:29979"/>
        <dbReference type="ChEBI" id="CHEBI:33019"/>
        <dbReference type="ChEBI" id="CHEBI:46398"/>
        <dbReference type="ChEBI" id="CHEBI:233474"/>
    </reaction>
</comment>
<comment type="catalytic activity">
    <reaction evidence="1">
        <text>L-seryl-[protein] + UTP = O-(5'-uridylyl)-L-seryl-[protein] + diphosphate</text>
        <dbReference type="Rhea" id="RHEA:64604"/>
        <dbReference type="Rhea" id="RHEA-COMP:9863"/>
        <dbReference type="Rhea" id="RHEA-COMP:16635"/>
        <dbReference type="ChEBI" id="CHEBI:29999"/>
        <dbReference type="ChEBI" id="CHEBI:33019"/>
        <dbReference type="ChEBI" id="CHEBI:46398"/>
        <dbReference type="ChEBI" id="CHEBI:156051"/>
    </reaction>
</comment>
<comment type="catalytic activity">
    <reaction evidence="1">
        <text>L-tyrosyl-[protein] + UTP = O-(5'-uridylyl)-L-tyrosyl-[protein] + diphosphate</text>
        <dbReference type="Rhea" id="RHEA:83887"/>
        <dbReference type="Rhea" id="RHEA-COMP:10136"/>
        <dbReference type="Rhea" id="RHEA-COMP:20238"/>
        <dbReference type="ChEBI" id="CHEBI:33019"/>
        <dbReference type="ChEBI" id="CHEBI:46398"/>
        <dbReference type="ChEBI" id="CHEBI:46858"/>
        <dbReference type="ChEBI" id="CHEBI:90602"/>
    </reaction>
</comment>
<comment type="cofactor">
    <cofactor evidence="1">
        <name>Mg(2+)</name>
        <dbReference type="ChEBI" id="CHEBI:18420"/>
    </cofactor>
    <cofactor evidence="1">
        <name>Mn(2+)</name>
        <dbReference type="ChEBI" id="CHEBI:29035"/>
    </cofactor>
</comment>
<comment type="similarity">
    <text evidence="1">Belongs to the SELO family.</text>
</comment>
<name>SELO_SALSV</name>
<reference key="1">
    <citation type="journal article" date="2011" name="J. Bacteriol.">
        <title>Comparative genomics of 28 Salmonella enterica isolates: evidence for CRISPR-mediated adaptive sublineage evolution.</title>
        <authorList>
            <person name="Fricke W.F."/>
            <person name="Mammel M.K."/>
            <person name="McDermott P.F."/>
            <person name="Tartera C."/>
            <person name="White D.G."/>
            <person name="Leclerc J.E."/>
            <person name="Ravel J."/>
            <person name="Cebula T.A."/>
        </authorList>
    </citation>
    <scope>NUCLEOTIDE SEQUENCE [LARGE SCALE GENOMIC DNA]</scope>
    <source>
        <strain>CVM19633</strain>
    </source>
</reference>
<protein>
    <recommendedName>
        <fullName evidence="1">Protein nucleotidyltransferase YdiU</fullName>
        <ecNumber evidence="1">2.7.7.-</ecNumber>
    </recommendedName>
    <alternativeName>
        <fullName evidence="1">Protein adenylyltransferase YdiU</fullName>
        <ecNumber evidence="1">2.7.7.108</ecNumber>
    </alternativeName>
    <alternativeName>
        <fullName evidence="1">Protein uridylyltransferase YdiU</fullName>
        <ecNumber evidence="1">2.7.7.-</ecNumber>
    </alternativeName>
</protein>
<dbReference type="EC" id="2.7.7.-" evidence="1"/>
<dbReference type="EC" id="2.7.7.108" evidence="1"/>
<dbReference type="EMBL" id="CP001127">
    <property type="protein sequence ID" value="ACF89599.1"/>
    <property type="molecule type" value="Genomic_DNA"/>
</dbReference>
<dbReference type="RefSeq" id="WP_000175671.1">
    <property type="nucleotide sequence ID" value="NC_011094.1"/>
</dbReference>
<dbReference type="SMR" id="B4TUG2"/>
<dbReference type="KEGG" id="sew:SeSA_A1440"/>
<dbReference type="HOGENOM" id="CLU_010245_4_1_6"/>
<dbReference type="Proteomes" id="UP000001865">
    <property type="component" value="Chromosome"/>
</dbReference>
<dbReference type="GO" id="GO:0070733">
    <property type="term" value="F:AMPylase activity"/>
    <property type="evidence" value="ECO:0007669"/>
    <property type="project" value="TreeGrafter"/>
</dbReference>
<dbReference type="GO" id="GO:0005524">
    <property type="term" value="F:ATP binding"/>
    <property type="evidence" value="ECO:0007669"/>
    <property type="project" value="UniProtKB-UniRule"/>
</dbReference>
<dbReference type="GO" id="GO:0000287">
    <property type="term" value="F:magnesium ion binding"/>
    <property type="evidence" value="ECO:0007669"/>
    <property type="project" value="UniProtKB-UniRule"/>
</dbReference>
<dbReference type="HAMAP" id="MF_00692">
    <property type="entry name" value="YdiU_SelO"/>
    <property type="match status" value="1"/>
</dbReference>
<dbReference type="InterPro" id="IPR054838">
    <property type="entry name" value="adnlytase_SelO"/>
</dbReference>
<dbReference type="InterPro" id="IPR003846">
    <property type="entry name" value="SelO"/>
</dbReference>
<dbReference type="NCBIfam" id="NF040880">
    <property type="entry name" value="adnlytase_SelO"/>
    <property type="match status" value="1"/>
</dbReference>
<dbReference type="NCBIfam" id="NF000658">
    <property type="entry name" value="PRK00029.1"/>
    <property type="match status" value="1"/>
</dbReference>
<dbReference type="PANTHER" id="PTHR32057">
    <property type="entry name" value="PROTEIN ADENYLYLTRANSFERASE SELO, MITOCHONDRIAL"/>
    <property type="match status" value="1"/>
</dbReference>
<dbReference type="PANTHER" id="PTHR32057:SF14">
    <property type="entry name" value="PROTEIN ADENYLYLTRANSFERASE SELO, MITOCHONDRIAL"/>
    <property type="match status" value="1"/>
</dbReference>
<dbReference type="Pfam" id="PF02696">
    <property type="entry name" value="SelO"/>
    <property type="match status" value="1"/>
</dbReference>
<keyword id="KW-0067">ATP-binding</keyword>
<keyword id="KW-0460">Magnesium</keyword>
<keyword id="KW-0464">Manganese</keyword>
<keyword id="KW-0479">Metal-binding</keyword>
<keyword id="KW-0547">Nucleotide-binding</keyword>
<keyword id="KW-0548">Nucleotidyltransferase</keyword>
<keyword id="KW-0808">Transferase</keyword>
<accession>B4TUG2</accession>